<evidence type="ECO:0000269" key="1">
    <source>
    </source>
</evidence>
<evidence type="ECO:0000303" key="2">
    <source>
    </source>
</evidence>
<evidence type="ECO:0000305" key="3"/>
<dbReference type="PaxDb" id="4097-P80785"/>
<dbReference type="Proteomes" id="UP000084051">
    <property type="component" value="Unplaced"/>
</dbReference>
<dbReference type="GO" id="GO:0005576">
    <property type="term" value="C:extracellular region"/>
    <property type="evidence" value="ECO:0007669"/>
    <property type="project" value="UniProtKB-KW"/>
</dbReference>
<reference evidence="3" key="1">
    <citation type="journal article" date="1997" name="J. Biol. Chem.">
        <title>Differential extraction and protein sequencing reveals major differences in patterns of primary cell wall proteins from plants.</title>
        <authorList>
            <person name="Robertson D."/>
            <person name="Mitchell G.P."/>
            <person name="Gilroy J.S."/>
            <person name="Gerrish C."/>
            <person name="Bolwell G.P."/>
            <person name="Slabas A.R."/>
        </authorList>
    </citation>
    <scope>PROTEIN SEQUENCE</scope>
    <scope>SUBCELLULAR LOCATION</scope>
</reference>
<protein>
    <recommendedName>
        <fullName>52 kDa cell wall protein</fullName>
    </recommendedName>
</protein>
<feature type="chain" id="PRO_0000079652" description="52 kDa cell wall protein">
    <location>
        <begin position="1"/>
        <end position="10" status="greater than"/>
    </location>
</feature>
<feature type="non-terminal residue" evidence="2">
    <location>
        <position position="10"/>
    </location>
</feature>
<proteinExistence type="evidence at protein level"/>
<sequence length="10" mass="1114">AQPPQQADFL</sequence>
<comment type="subcellular location">
    <subcellularLocation>
        <location evidence="1">Secreted</location>
        <location evidence="1">Cell wall</location>
    </subcellularLocation>
</comment>
<organism>
    <name type="scientific">Nicotiana tabacum</name>
    <name type="common">Common tobacco</name>
    <dbReference type="NCBI Taxonomy" id="4097"/>
    <lineage>
        <taxon>Eukaryota</taxon>
        <taxon>Viridiplantae</taxon>
        <taxon>Streptophyta</taxon>
        <taxon>Embryophyta</taxon>
        <taxon>Tracheophyta</taxon>
        <taxon>Spermatophyta</taxon>
        <taxon>Magnoliopsida</taxon>
        <taxon>eudicotyledons</taxon>
        <taxon>Gunneridae</taxon>
        <taxon>Pentapetalae</taxon>
        <taxon>asterids</taxon>
        <taxon>lamiids</taxon>
        <taxon>Solanales</taxon>
        <taxon>Solanaceae</taxon>
        <taxon>Nicotianoideae</taxon>
        <taxon>Nicotianeae</taxon>
        <taxon>Nicotiana</taxon>
    </lineage>
</organism>
<accession>P80785</accession>
<keyword id="KW-0134">Cell wall</keyword>
<keyword id="KW-0903">Direct protein sequencing</keyword>
<keyword id="KW-1185">Reference proteome</keyword>
<keyword id="KW-0964">Secreted</keyword>
<name>CWP08_TOBAC</name>